<sequence length="269" mass="29503">MLRSMLTASTTLNQLQQQIDTISSNLSNSNTTGYKAKDTNFSELVRQQFDQVDEKNEEVAKARKTPPGLRLGVGAMMSSRLVSDQGSIQKTDRDLDIAFTSPYQYLQVNVNGNRQYTRDGALYVTPSAANANQLQLVTGNGYPVLDENGNTVNIDSSMKNITINKNGTLTASDGNAVQRFNLGVVQVNNPQELKSEGNNLFSIDNAAAFEELNGANRQNIGMQQGSLEMSNVDISEQMTDLITSQRSYQLNSRTITMGDQMLGLINSVR</sequence>
<reference key="1">
    <citation type="journal article" date="1997" name="Microbiology">
        <title>The Bacillus subtilis genome from gerBC (311 degrees) to licR (334 degrees).</title>
        <authorList>
            <person name="Presecan E."/>
            <person name="Moszer I."/>
            <person name="Boursier L."/>
            <person name="Cruz Ramos H."/>
            <person name="De La Fuente V."/>
            <person name="Hullo M.-F."/>
            <person name="Lelong C."/>
            <person name="Schleich S."/>
            <person name="Sekowska A."/>
            <person name="Song B.H."/>
            <person name="Villani G."/>
            <person name="Kunst F."/>
            <person name="Danchin A."/>
            <person name="Glaser P."/>
        </authorList>
    </citation>
    <scope>NUCLEOTIDE SEQUENCE [GENOMIC DNA]</scope>
    <source>
        <strain>168</strain>
    </source>
</reference>
<reference key="2">
    <citation type="journal article" date="1997" name="Nature">
        <title>The complete genome sequence of the Gram-positive bacterium Bacillus subtilis.</title>
        <authorList>
            <person name="Kunst F."/>
            <person name="Ogasawara N."/>
            <person name="Moszer I."/>
            <person name="Albertini A.M."/>
            <person name="Alloni G."/>
            <person name="Azevedo V."/>
            <person name="Bertero M.G."/>
            <person name="Bessieres P."/>
            <person name="Bolotin A."/>
            <person name="Borchert S."/>
            <person name="Borriss R."/>
            <person name="Boursier L."/>
            <person name="Brans A."/>
            <person name="Braun M."/>
            <person name="Brignell S.C."/>
            <person name="Bron S."/>
            <person name="Brouillet S."/>
            <person name="Bruschi C.V."/>
            <person name="Caldwell B."/>
            <person name="Capuano V."/>
            <person name="Carter N.M."/>
            <person name="Choi S.-K."/>
            <person name="Codani J.-J."/>
            <person name="Connerton I.F."/>
            <person name="Cummings N.J."/>
            <person name="Daniel R.A."/>
            <person name="Denizot F."/>
            <person name="Devine K.M."/>
            <person name="Duesterhoeft A."/>
            <person name="Ehrlich S.D."/>
            <person name="Emmerson P.T."/>
            <person name="Entian K.-D."/>
            <person name="Errington J."/>
            <person name="Fabret C."/>
            <person name="Ferrari E."/>
            <person name="Foulger D."/>
            <person name="Fritz C."/>
            <person name="Fujita M."/>
            <person name="Fujita Y."/>
            <person name="Fuma S."/>
            <person name="Galizzi A."/>
            <person name="Galleron N."/>
            <person name="Ghim S.-Y."/>
            <person name="Glaser P."/>
            <person name="Goffeau A."/>
            <person name="Golightly E.J."/>
            <person name="Grandi G."/>
            <person name="Guiseppi G."/>
            <person name="Guy B.J."/>
            <person name="Haga K."/>
            <person name="Haiech J."/>
            <person name="Harwood C.R."/>
            <person name="Henaut A."/>
            <person name="Hilbert H."/>
            <person name="Holsappel S."/>
            <person name="Hosono S."/>
            <person name="Hullo M.-F."/>
            <person name="Itaya M."/>
            <person name="Jones L.-M."/>
            <person name="Joris B."/>
            <person name="Karamata D."/>
            <person name="Kasahara Y."/>
            <person name="Klaerr-Blanchard M."/>
            <person name="Klein C."/>
            <person name="Kobayashi Y."/>
            <person name="Koetter P."/>
            <person name="Koningstein G."/>
            <person name="Krogh S."/>
            <person name="Kumano M."/>
            <person name="Kurita K."/>
            <person name="Lapidus A."/>
            <person name="Lardinois S."/>
            <person name="Lauber J."/>
            <person name="Lazarevic V."/>
            <person name="Lee S.-M."/>
            <person name="Levine A."/>
            <person name="Liu H."/>
            <person name="Masuda S."/>
            <person name="Mauel C."/>
            <person name="Medigue C."/>
            <person name="Medina N."/>
            <person name="Mellado R.P."/>
            <person name="Mizuno M."/>
            <person name="Moestl D."/>
            <person name="Nakai S."/>
            <person name="Noback M."/>
            <person name="Noone D."/>
            <person name="O'Reilly M."/>
            <person name="Ogawa K."/>
            <person name="Ogiwara A."/>
            <person name="Oudega B."/>
            <person name="Park S.-H."/>
            <person name="Parro V."/>
            <person name="Pohl T.M."/>
            <person name="Portetelle D."/>
            <person name="Porwollik S."/>
            <person name="Prescott A.M."/>
            <person name="Presecan E."/>
            <person name="Pujic P."/>
            <person name="Purnelle B."/>
            <person name="Rapoport G."/>
            <person name="Rey M."/>
            <person name="Reynolds S."/>
            <person name="Rieger M."/>
            <person name="Rivolta C."/>
            <person name="Rocha E."/>
            <person name="Roche B."/>
            <person name="Rose M."/>
            <person name="Sadaie Y."/>
            <person name="Sato T."/>
            <person name="Scanlan E."/>
            <person name="Schleich S."/>
            <person name="Schroeter R."/>
            <person name="Scoffone F."/>
            <person name="Sekiguchi J."/>
            <person name="Sekowska A."/>
            <person name="Seror S.J."/>
            <person name="Serror P."/>
            <person name="Shin B.-S."/>
            <person name="Soldo B."/>
            <person name="Sorokin A."/>
            <person name="Tacconi E."/>
            <person name="Takagi T."/>
            <person name="Takahashi H."/>
            <person name="Takemaru K."/>
            <person name="Takeuchi M."/>
            <person name="Tamakoshi A."/>
            <person name="Tanaka T."/>
            <person name="Terpstra P."/>
            <person name="Tognoni A."/>
            <person name="Tosato V."/>
            <person name="Uchiyama S."/>
            <person name="Vandenbol M."/>
            <person name="Vannier F."/>
            <person name="Vassarotti A."/>
            <person name="Viari A."/>
            <person name="Wambutt R."/>
            <person name="Wedler E."/>
            <person name="Wedler H."/>
            <person name="Weitzenegger T."/>
            <person name="Winters P."/>
            <person name="Wipat A."/>
            <person name="Yamamoto H."/>
            <person name="Yamane K."/>
            <person name="Yasumoto K."/>
            <person name="Yata K."/>
            <person name="Yoshida K."/>
            <person name="Yoshikawa H.-F."/>
            <person name="Zumstein E."/>
            <person name="Yoshikawa H."/>
            <person name="Danchin A."/>
        </authorList>
    </citation>
    <scope>NUCLEOTIDE SEQUENCE [LARGE SCALE GENOMIC DNA]</scope>
    <source>
        <strain>168</strain>
    </source>
</reference>
<reference key="3">
    <citation type="journal article" date="2009" name="Microbiology">
        <title>From a consortium sequence to a unified sequence: the Bacillus subtilis 168 reference genome a decade later.</title>
        <authorList>
            <person name="Barbe V."/>
            <person name="Cruveiller S."/>
            <person name="Kunst F."/>
            <person name="Lenoble P."/>
            <person name="Meurice G."/>
            <person name="Sekowska A."/>
            <person name="Vallenet D."/>
            <person name="Wang T."/>
            <person name="Moszer I."/>
            <person name="Medigue C."/>
            <person name="Danchin A."/>
        </authorList>
    </citation>
    <scope>SEQUENCE REVISION TO 68-72</scope>
</reference>
<reference key="4">
    <citation type="journal article" date="1995" name="J. Bacteriol.">
        <title>Bacillus subtilis possesses a second determinant with extensive sequence similarity to the Escherichia coli mreB morphogene.</title>
        <authorList>
            <person name="Abhayawardhane Y."/>
            <person name="Stewart G.C."/>
        </authorList>
    </citation>
    <scope>NUCLEOTIDE SEQUENCE [GENOMIC DNA] OF 1-135</scope>
    <source>
        <strain>168</strain>
    </source>
</reference>
<gene>
    <name type="primary">flhP</name>
    <name type="synonym">yvyB</name>
    <name type="ordered locus">BSU36390</name>
</gene>
<proteinExistence type="inferred from homology"/>
<feature type="chain" id="PRO_0000180856" description="Flagellar hook-basal body complex protein FlhP">
    <location>
        <begin position="1"/>
        <end position="269"/>
    </location>
</feature>
<feature type="coiled-coil region" evidence="1">
    <location>
        <begin position="7"/>
        <end position="65"/>
    </location>
</feature>
<feature type="sequence conflict" description="In Ref. 1; CAB05941." evidence="2" ref="1">
    <original>GLRLG</original>
    <variation>LAPL</variation>
    <location>
        <begin position="68"/>
        <end position="72"/>
    </location>
</feature>
<dbReference type="EMBL" id="Z83337">
    <property type="protein sequence ID" value="CAB05941.1"/>
    <property type="molecule type" value="Genomic_DNA"/>
</dbReference>
<dbReference type="EMBL" id="AL009126">
    <property type="protein sequence ID" value="CAB15656.2"/>
    <property type="molecule type" value="Genomic_DNA"/>
</dbReference>
<dbReference type="EMBL" id="U12962">
    <property type="protein sequence ID" value="AAA67880.1"/>
    <property type="molecule type" value="Genomic_DNA"/>
</dbReference>
<dbReference type="PIR" id="G69623">
    <property type="entry name" value="G69623"/>
</dbReference>
<dbReference type="RefSeq" id="NP_391520.2">
    <property type="nucleotide sequence ID" value="NC_000964.3"/>
</dbReference>
<dbReference type="RefSeq" id="WP_003244381.1">
    <property type="nucleotide sequence ID" value="NZ_OZ025638.1"/>
</dbReference>
<dbReference type="SMR" id="P39753"/>
<dbReference type="FunCoup" id="P39753">
    <property type="interactions" value="66"/>
</dbReference>
<dbReference type="STRING" id="224308.BSU36390"/>
<dbReference type="PaxDb" id="224308-BSU36390"/>
<dbReference type="EnsemblBacteria" id="CAB15656">
    <property type="protein sequence ID" value="CAB15656"/>
    <property type="gene ID" value="BSU_36390"/>
</dbReference>
<dbReference type="GeneID" id="936913"/>
<dbReference type="KEGG" id="bsu:BSU36390"/>
<dbReference type="PATRIC" id="fig|224308.179.peg.3939"/>
<dbReference type="eggNOG" id="COG4786">
    <property type="taxonomic scope" value="Bacteria"/>
</dbReference>
<dbReference type="InParanoid" id="P39753"/>
<dbReference type="OrthoDB" id="9804559at2"/>
<dbReference type="PhylomeDB" id="P39753"/>
<dbReference type="BioCyc" id="BSUB:BSU36390-MONOMER"/>
<dbReference type="Proteomes" id="UP000001570">
    <property type="component" value="Chromosome"/>
</dbReference>
<dbReference type="GO" id="GO:0009288">
    <property type="term" value="C:bacterial-type flagellum"/>
    <property type="evidence" value="ECO:0000318"/>
    <property type="project" value="GO_Central"/>
</dbReference>
<dbReference type="GO" id="GO:0044781">
    <property type="term" value="P:bacterial-type flagellum organization"/>
    <property type="evidence" value="ECO:0007669"/>
    <property type="project" value="UniProtKB-KW"/>
</dbReference>
<dbReference type="GO" id="GO:0071978">
    <property type="term" value="P:bacterial-type flagellum-dependent swarming motility"/>
    <property type="evidence" value="ECO:0000318"/>
    <property type="project" value="GO_Central"/>
</dbReference>
<dbReference type="InterPro" id="IPR001444">
    <property type="entry name" value="Flag_bb_rod_N"/>
</dbReference>
<dbReference type="InterPro" id="IPR019776">
    <property type="entry name" value="Flagellar_basal_body_rod_CS"/>
</dbReference>
<dbReference type="InterPro" id="IPR020013">
    <property type="entry name" value="Flagellar_FlgE/F/G"/>
</dbReference>
<dbReference type="InterPro" id="IPR010930">
    <property type="entry name" value="Flg_bb/hook_C_dom"/>
</dbReference>
<dbReference type="InterPro" id="IPR037925">
    <property type="entry name" value="FlgE/F/G-like"/>
</dbReference>
<dbReference type="InterPro" id="IPR053967">
    <property type="entry name" value="LlgE_F_G-like_D1"/>
</dbReference>
<dbReference type="NCBIfam" id="TIGR03506">
    <property type="entry name" value="FlgEFG_subfam"/>
    <property type="match status" value="2"/>
</dbReference>
<dbReference type="PANTHER" id="PTHR30435:SF19">
    <property type="entry name" value="FLAGELLAR BASAL-BODY ROD PROTEIN FLGG"/>
    <property type="match status" value="1"/>
</dbReference>
<dbReference type="PANTHER" id="PTHR30435">
    <property type="entry name" value="FLAGELLAR PROTEIN"/>
    <property type="match status" value="1"/>
</dbReference>
<dbReference type="Pfam" id="PF00460">
    <property type="entry name" value="Flg_bb_rod"/>
    <property type="match status" value="1"/>
</dbReference>
<dbReference type="Pfam" id="PF06429">
    <property type="entry name" value="Flg_bbr_C"/>
    <property type="match status" value="1"/>
</dbReference>
<dbReference type="Pfam" id="PF22692">
    <property type="entry name" value="LlgE_F_G_D1"/>
    <property type="match status" value="1"/>
</dbReference>
<dbReference type="SUPFAM" id="SSF117143">
    <property type="entry name" value="Flagellar hook protein flgE"/>
    <property type="match status" value="1"/>
</dbReference>
<dbReference type="PROSITE" id="PS00588">
    <property type="entry name" value="FLAGELLA_BB_ROD"/>
    <property type="match status" value="1"/>
</dbReference>
<name>FLHP_BACSU</name>
<comment type="similarity">
    <text evidence="2">Belongs to the flagella basal body rod proteins family.</text>
</comment>
<organism>
    <name type="scientific">Bacillus subtilis (strain 168)</name>
    <dbReference type="NCBI Taxonomy" id="224308"/>
    <lineage>
        <taxon>Bacteria</taxon>
        <taxon>Bacillati</taxon>
        <taxon>Bacillota</taxon>
        <taxon>Bacilli</taxon>
        <taxon>Bacillales</taxon>
        <taxon>Bacillaceae</taxon>
        <taxon>Bacillus</taxon>
    </lineage>
</organism>
<evidence type="ECO:0000255" key="1"/>
<evidence type="ECO:0000305" key="2"/>
<keyword id="KW-1005">Bacterial flagellum biogenesis</keyword>
<keyword id="KW-0175">Coiled coil</keyword>
<keyword id="KW-1185">Reference proteome</keyword>
<accession>P39753</accession>
<accession>P94582</accession>
<protein>
    <recommendedName>
        <fullName>Flagellar hook-basal body complex protein FlhP</fullName>
    </recommendedName>
</protein>